<organism>
    <name type="scientific">Escherichia coli O6:H1 (strain CFT073 / ATCC 700928 / UPEC)</name>
    <dbReference type="NCBI Taxonomy" id="199310"/>
    <lineage>
        <taxon>Bacteria</taxon>
        <taxon>Pseudomonadati</taxon>
        <taxon>Pseudomonadota</taxon>
        <taxon>Gammaproteobacteria</taxon>
        <taxon>Enterobacterales</taxon>
        <taxon>Enterobacteriaceae</taxon>
        <taxon>Escherichia</taxon>
    </lineage>
</organism>
<sequence>MLDLFKAIGLGLVVLLPLANPLTTVALFLGLAGNMSSAERNRQSLMASVYVFAIMMVAYYAGQLVMDTFGISIPGLRIAGGLIVAFIGFRMLFPQQKAIDSPEAKSKSEELEDEPSANIAFVPLAMPSTAGPGTIAMIISSASTVRQSSTFADWVLMVAPPLIFFLVAVILWGSLRSSGAIMRLVGKGGIEAISRLMGFLLVCMGVQFIINGILEIIKTYH</sequence>
<evidence type="ECO:0000250" key="1"/>
<evidence type="ECO:0000255" key="2"/>
<evidence type="ECO:0000305" key="3"/>
<reference key="1">
    <citation type="journal article" date="2002" name="Proc. Natl. Acad. Sci. U.S.A.">
        <title>Extensive mosaic structure revealed by the complete genome sequence of uropathogenic Escherichia coli.</title>
        <authorList>
            <person name="Welch R.A."/>
            <person name="Burland V."/>
            <person name="Plunkett G. III"/>
            <person name="Redford P."/>
            <person name="Roesch P."/>
            <person name="Rasko D."/>
            <person name="Buckles E.L."/>
            <person name="Liou S.-R."/>
            <person name="Boutin A."/>
            <person name="Hackett J."/>
            <person name="Stroud D."/>
            <person name="Mayhew G.F."/>
            <person name="Rose D.J."/>
            <person name="Zhou S."/>
            <person name="Schwartz D.C."/>
            <person name="Perna N.T."/>
            <person name="Mobley H.L.T."/>
            <person name="Donnenberg M.S."/>
            <person name="Blattner F.R."/>
        </authorList>
    </citation>
    <scope>NUCLEOTIDE SEQUENCE [LARGE SCALE GENOMIC DNA]</scope>
    <source>
        <strain>CFT073 / ATCC 700928 / UPEC</strain>
    </source>
</reference>
<protein>
    <recommendedName>
        <fullName>UPF0056 inner membrane protein MarC</fullName>
    </recommendedName>
</protein>
<name>MARC_ECOL6</name>
<gene>
    <name type="primary">marC</name>
    <name type="ordered locus">c1951</name>
</gene>
<keyword id="KW-0997">Cell inner membrane</keyword>
<keyword id="KW-1003">Cell membrane</keyword>
<keyword id="KW-0472">Membrane</keyword>
<keyword id="KW-1185">Reference proteome</keyword>
<keyword id="KW-0812">Transmembrane</keyword>
<keyword id="KW-1133">Transmembrane helix</keyword>
<feature type="chain" id="PRO_0000343819" description="UPF0056 inner membrane protein MarC">
    <location>
        <begin position="1"/>
        <end position="221"/>
    </location>
</feature>
<feature type="topological domain" description="Periplasmic" evidence="2">
    <location>
        <begin position="1"/>
        <end position="7"/>
    </location>
</feature>
<feature type="transmembrane region" description="Helical" evidence="2">
    <location>
        <begin position="8"/>
        <end position="28"/>
    </location>
</feature>
<feature type="topological domain" description="Cytoplasmic" evidence="2">
    <location>
        <begin position="29"/>
        <end position="44"/>
    </location>
</feature>
<feature type="transmembrane region" description="Helical" evidence="2">
    <location>
        <begin position="45"/>
        <end position="65"/>
    </location>
</feature>
<feature type="topological domain" description="Periplasmic" evidence="2">
    <location>
        <begin position="66"/>
        <end position="68"/>
    </location>
</feature>
<feature type="transmembrane region" description="Helical" evidence="2">
    <location>
        <begin position="69"/>
        <end position="89"/>
    </location>
</feature>
<feature type="topological domain" description="Cytoplasmic" evidence="2">
    <location>
        <begin position="90"/>
        <end position="118"/>
    </location>
</feature>
<feature type="transmembrane region" description="Helical" evidence="2">
    <location>
        <begin position="119"/>
        <end position="139"/>
    </location>
</feature>
<feature type="topological domain" description="Periplasmic" evidence="2">
    <location>
        <begin position="140"/>
        <end position="154"/>
    </location>
</feature>
<feature type="transmembrane region" description="Helical" evidence="2">
    <location>
        <begin position="155"/>
        <end position="175"/>
    </location>
</feature>
<feature type="topological domain" description="Cytoplasmic" evidence="2">
    <location>
        <begin position="176"/>
        <end position="196"/>
    </location>
</feature>
<feature type="transmembrane region" description="Helical" evidence="2">
    <location>
        <begin position="197"/>
        <end position="217"/>
    </location>
</feature>
<feature type="topological domain" description="Periplasmic" evidence="2">
    <location>
        <begin position="218"/>
        <end position="221"/>
    </location>
</feature>
<proteinExistence type="inferred from homology"/>
<accession>Q8FHE5</accession>
<dbReference type="EMBL" id="AE014075">
    <property type="protein sequence ID" value="AAN80408.1"/>
    <property type="molecule type" value="Genomic_DNA"/>
</dbReference>
<dbReference type="RefSeq" id="WP_000885042.1">
    <property type="nucleotide sequence ID" value="NZ_CP051263.1"/>
</dbReference>
<dbReference type="STRING" id="199310.c1951"/>
<dbReference type="KEGG" id="ecc:c1951"/>
<dbReference type="eggNOG" id="COG2095">
    <property type="taxonomic scope" value="Bacteria"/>
</dbReference>
<dbReference type="HOGENOM" id="CLU_079909_2_0_6"/>
<dbReference type="BioCyc" id="ECOL199310:C1951-MONOMER"/>
<dbReference type="Proteomes" id="UP000001410">
    <property type="component" value="Chromosome"/>
</dbReference>
<dbReference type="GO" id="GO:0005886">
    <property type="term" value="C:plasma membrane"/>
    <property type="evidence" value="ECO:0007669"/>
    <property type="project" value="UniProtKB-SubCell"/>
</dbReference>
<dbReference type="InterPro" id="IPR002771">
    <property type="entry name" value="Multi_antbiot-R_MarC"/>
</dbReference>
<dbReference type="NCBIfam" id="TIGR00427">
    <property type="entry name" value="NAAT family transporter"/>
    <property type="match status" value="1"/>
</dbReference>
<dbReference type="NCBIfam" id="NF008228">
    <property type="entry name" value="PRK10995.1"/>
    <property type="match status" value="1"/>
</dbReference>
<dbReference type="PANTHER" id="PTHR33508:SF2">
    <property type="entry name" value="UPF0056 INNER MEMBRANE PROTEIN MARC"/>
    <property type="match status" value="1"/>
</dbReference>
<dbReference type="PANTHER" id="PTHR33508">
    <property type="entry name" value="UPF0056 MEMBRANE PROTEIN YHCE"/>
    <property type="match status" value="1"/>
</dbReference>
<dbReference type="Pfam" id="PF01914">
    <property type="entry name" value="MarC"/>
    <property type="match status" value="1"/>
</dbReference>
<comment type="subcellular location">
    <subcellularLocation>
        <location evidence="1">Cell inner membrane</location>
        <topology evidence="1">Multi-pass membrane protein</topology>
    </subcellularLocation>
</comment>
<comment type="similarity">
    <text evidence="3">Belongs to the UPF0056 (MarC) family.</text>
</comment>